<sequence length="414" mass="45999">MLNTSTSGGSGVHVVLASSSSASVNGLKNYYIAKIQEKEIVLRDKIENLRRLQAQRNELNGRVRSLKEELQQLQEPGSHVGEVVKVMGKKKVLIKISQEGKYIVDIDKSIELKDLTPGVRVALRNDSYALHKILPNKIDPLVSLMKVEKVPDATYEMVGGLDEQIKEIKEVIELPIKHPELFESLGIAQPKGVIMYGPPGTGKTLLARAVAHHTDCTFIRVSGSELVQKYIGEGSKMVRELFVMAREHAPSIIFMDEIDSIGSTRTEGGKGGGDSEVQRTMLELLNQLDGFESTQNIKIIMATNRIDILDPALLRPGRIDRKIEFPNPNELARLDILKIHSRRMNLTRGINLRKIASMLGGASGAEIKATCTEAGMFALRERRVHVTQEDLEMAVAKVMKRGDESNMSFKKLFK</sequence>
<organism>
    <name type="scientific">Naegleria fowleri</name>
    <name type="common">Brain eating amoeba</name>
    <dbReference type="NCBI Taxonomy" id="5763"/>
    <lineage>
        <taxon>Eukaryota</taxon>
        <taxon>Discoba</taxon>
        <taxon>Heterolobosea</taxon>
        <taxon>Tetramitia</taxon>
        <taxon>Eutetramitia</taxon>
        <taxon>Vahlkampfiidae</taxon>
        <taxon>Naegleria</taxon>
    </lineage>
</organism>
<protein>
    <recommendedName>
        <fullName>26S proteasome regulatory subunit 8 homolog</fullName>
    </recommendedName>
    <alternativeName>
        <fullName>Tat-binding protein homolog</fullName>
    </alternativeName>
</protein>
<name>PRS8_NAEFO</name>
<keyword id="KW-0067">ATP-binding</keyword>
<keyword id="KW-0963">Cytoplasm</keyword>
<keyword id="KW-0547">Nucleotide-binding</keyword>
<keyword id="KW-0539">Nucleus</keyword>
<keyword id="KW-0647">Proteasome</keyword>
<evidence type="ECO:0000250" key="1"/>
<evidence type="ECO:0000255" key="2"/>
<evidence type="ECO:0000305" key="3"/>
<reference key="1">
    <citation type="submission" date="1996-06" db="EMBL/GenBank/DDBJ databases">
        <title>Isolation and characterization of a Naegleria fowleri Tat-binding protein cDNA.</title>
        <authorList>
            <person name="Sullivan P.K."/>
            <person name="Shaw D.R."/>
            <person name="Marciano-Cabral F."/>
            <person name="Ennis H.L."/>
        </authorList>
    </citation>
    <scope>NUCLEOTIDE SEQUENCE [MRNA]</scope>
    <source>
        <strain>LEE mp</strain>
    </source>
</reference>
<dbReference type="EMBL" id="U41812">
    <property type="protein sequence ID" value="AAB01762.1"/>
    <property type="molecule type" value="mRNA"/>
</dbReference>
<dbReference type="SMR" id="Q25544"/>
<dbReference type="VEuPathDB" id="AmoebaDB:FDP41_005397"/>
<dbReference type="VEuPathDB" id="AmoebaDB:NF0015020"/>
<dbReference type="VEuPathDB" id="AmoebaDB:NfTy_065890"/>
<dbReference type="GO" id="GO:0005737">
    <property type="term" value="C:cytoplasm"/>
    <property type="evidence" value="ECO:0007669"/>
    <property type="project" value="UniProtKB-SubCell"/>
</dbReference>
<dbReference type="GO" id="GO:0005634">
    <property type="term" value="C:nucleus"/>
    <property type="evidence" value="ECO:0007669"/>
    <property type="project" value="UniProtKB-SubCell"/>
</dbReference>
<dbReference type="GO" id="GO:0000502">
    <property type="term" value="C:proteasome complex"/>
    <property type="evidence" value="ECO:0007669"/>
    <property type="project" value="UniProtKB-KW"/>
</dbReference>
<dbReference type="GO" id="GO:0005524">
    <property type="term" value="F:ATP binding"/>
    <property type="evidence" value="ECO:0007669"/>
    <property type="project" value="UniProtKB-KW"/>
</dbReference>
<dbReference type="GO" id="GO:0016887">
    <property type="term" value="F:ATP hydrolysis activity"/>
    <property type="evidence" value="ECO:0007669"/>
    <property type="project" value="InterPro"/>
</dbReference>
<dbReference type="CDD" id="cd19502">
    <property type="entry name" value="RecA-like_PAN_like"/>
    <property type="match status" value="1"/>
</dbReference>
<dbReference type="FunFam" id="1.10.8.60:FF:000006">
    <property type="entry name" value="26S protease regulatory subunit 8"/>
    <property type="match status" value="1"/>
</dbReference>
<dbReference type="FunFam" id="2.40.50.140:FF:000044">
    <property type="entry name" value="26S protease regulatory subunit 8"/>
    <property type="match status" value="1"/>
</dbReference>
<dbReference type="FunFam" id="3.40.50.300:FF:000030">
    <property type="entry name" value="26S protease regulatory subunit 8"/>
    <property type="match status" value="1"/>
</dbReference>
<dbReference type="Gene3D" id="1.10.8.60">
    <property type="match status" value="1"/>
</dbReference>
<dbReference type="Gene3D" id="2.40.50.140">
    <property type="entry name" value="Nucleic acid-binding proteins"/>
    <property type="match status" value="1"/>
</dbReference>
<dbReference type="Gene3D" id="3.40.50.300">
    <property type="entry name" value="P-loop containing nucleotide triphosphate hydrolases"/>
    <property type="match status" value="1"/>
</dbReference>
<dbReference type="InterPro" id="IPR050221">
    <property type="entry name" value="26S_Proteasome_ATPase"/>
</dbReference>
<dbReference type="InterPro" id="IPR003593">
    <property type="entry name" value="AAA+_ATPase"/>
</dbReference>
<dbReference type="InterPro" id="IPR041569">
    <property type="entry name" value="AAA_lid_3"/>
</dbReference>
<dbReference type="InterPro" id="IPR003959">
    <property type="entry name" value="ATPase_AAA_core"/>
</dbReference>
<dbReference type="InterPro" id="IPR003960">
    <property type="entry name" value="ATPase_AAA_CS"/>
</dbReference>
<dbReference type="InterPro" id="IPR012340">
    <property type="entry name" value="NA-bd_OB-fold"/>
</dbReference>
<dbReference type="InterPro" id="IPR027417">
    <property type="entry name" value="P-loop_NTPase"/>
</dbReference>
<dbReference type="InterPro" id="IPR032501">
    <property type="entry name" value="Prot_ATP_ID_OB_2nd"/>
</dbReference>
<dbReference type="PANTHER" id="PTHR23073">
    <property type="entry name" value="26S PROTEASOME REGULATORY SUBUNIT"/>
    <property type="match status" value="1"/>
</dbReference>
<dbReference type="Pfam" id="PF00004">
    <property type="entry name" value="AAA"/>
    <property type="match status" value="1"/>
</dbReference>
<dbReference type="Pfam" id="PF17862">
    <property type="entry name" value="AAA_lid_3"/>
    <property type="match status" value="1"/>
</dbReference>
<dbReference type="Pfam" id="PF16450">
    <property type="entry name" value="Prot_ATP_ID_OB_C"/>
    <property type="match status" value="1"/>
</dbReference>
<dbReference type="SMART" id="SM00382">
    <property type="entry name" value="AAA"/>
    <property type="match status" value="1"/>
</dbReference>
<dbReference type="SUPFAM" id="SSF52540">
    <property type="entry name" value="P-loop containing nucleoside triphosphate hydrolases"/>
    <property type="match status" value="1"/>
</dbReference>
<dbReference type="PROSITE" id="PS00674">
    <property type="entry name" value="AAA"/>
    <property type="match status" value="1"/>
</dbReference>
<accession>Q25544</accession>
<comment type="function">
    <text evidence="1">The 26S proteasome is involved in the ATP-dependent degradation of ubiquitinated proteins. The regulatory (or ATPase) complex confers ATP dependency and substrate specificity to the 26S complex (By similarity).</text>
</comment>
<comment type="subcellular location">
    <subcellularLocation>
        <location evidence="3">Cytoplasm</location>
    </subcellularLocation>
    <subcellularLocation>
        <location evidence="3">Nucleus</location>
    </subcellularLocation>
</comment>
<comment type="similarity">
    <text evidence="3">Belongs to the AAA ATPase family.</text>
</comment>
<feature type="chain" id="PRO_0000084729" description="26S proteasome regulatory subunit 8 homolog">
    <location>
        <begin position="1"/>
        <end position="414"/>
    </location>
</feature>
<feature type="binding site" evidence="2">
    <location>
        <begin position="197"/>
        <end position="204"/>
    </location>
    <ligand>
        <name>ATP</name>
        <dbReference type="ChEBI" id="CHEBI:30616"/>
    </ligand>
</feature>
<proteinExistence type="evidence at transcript level"/>